<comment type="similarity">
    <text evidence="1">Belongs to the LEA type 2 family.</text>
</comment>
<evidence type="ECO:0000305" key="1"/>
<evidence type="ECO:0007829" key="2">
    <source>
        <dbReference type="PDB" id="1XO8"/>
    </source>
</evidence>
<dbReference type="EMBL" id="Y10085">
    <property type="protein sequence ID" value="CAA71174.1"/>
    <property type="molecule type" value="Genomic_DNA"/>
</dbReference>
<dbReference type="EMBL" id="Y12776">
    <property type="protein sequence ID" value="CAA73311.1"/>
    <property type="molecule type" value="Genomic_DNA"/>
</dbReference>
<dbReference type="EMBL" id="AC061957">
    <property type="protein sequence ID" value="AAF81307.1"/>
    <property type="molecule type" value="Genomic_DNA"/>
</dbReference>
<dbReference type="EMBL" id="CP002684">
    <property type="protein sequence ID" value="AEE27291.1"/>
    <property type="molecule type" value="Genomic_DNA"/>
</dbReference>
<dbReference type="EMBL" id="AY074855">
    <property type="protein sequence ID" value="AAL75906.1"/>
    <property type="molecule type" value="mRNA"/>
</dbReference>
<dbReference type="EMBL" id="BT015111">
    <property type="protein sequence ID" value="AAT71983.1"/>
    <property type="molecule type" value="mRNA"/>
</dbReference>
<dbReference type="EMBL" id="Z37258">
    <property type="protein sequence ID" value="CAA85534.1"/>
    <property type="molecule type" value="mRNA"/>
</dbReference>
<dbReference type="PIR" id="D86145">
    <property type="entry name" value="D86145"/>
</dbReference>
<dbReference type="RefSeq" id="NP_171654.1">
    <property type="nucleotide sequence ID" value="NM_100029.6"/>
</dbReference>
<dbReference type="PDB" id="1XO8">
    <property type="method" value="NMR"/>
    <property type="chains" value="A=1-151"/>
</dbReference>
<dbReference type="PDBsum" id="1XO8"/>
<dbReference type="BMRB" id="O03983"/>
<dbReference type="SMR" id="O03983"/>
<dbReference type="BioGRID" id="22313">
    <property type="interactions" value="1"/>
</dbReference>
<dbReference type="FunCoup" id="O03983">
    <property type="interactions" value="183"/>
</dbReference>
<dbReference type="IntAct" id="O03983">
    <property type="interactions" value="1"/>
</dbReference>
<dbReference type="STRING" id="3702.O03983"/>
<dbReference type="iPTMnet" id="O03983"/>
<dbReference type="PaxDb" id="3702-AT1G01470.1"/>
<dbReference type="ProteomicsDB" id="230367"/>
<dbReference type="DNASU" id="837071"/>
<dbReference type="EnsemblPlants" id="AT1G01470.1">
    <property type="protein sequence ID" value="AT1G01470.1"/>
    <property type="gene ID" value="AT1G01470"/>
</dbReference>
<dbReference type="GeneID" id="837071"/>
<dbReference type="Gramene" id="AT1G01470.1">
    <property type="protein sequence ID" value="AT1G01470.1"/>
    <property type="gene ID" value="AT1G01470"/>
</dbReference>
<dbReference type="KEGG" id="ath:AT1G01470"/>
<dbReference type="Araport" id="AT1G01470"/>
<dbReference type="TAIR" id="AT1G01470">
    <property type="gene designation" value="LEA14"/>
</dbReference>
<dbReference type="eggNOG" id="ENOG502RZ6Q">
    <property type="taxonomic scope" value="Eukaryota"/>
</dbReference>
<dbReference type="HOGENOM" id="CLU_118295_0_0_1"/>
<dbReference type="InParanoid" id="O03983"/>
<dbReference type="OMA" id="GVDWDID"/>
<dbReference type="OrthoDB" id="588983at2759"/>
<dbReference type="PhylomeDB" id="O03983"/>
<dbReference type="EvolutionaryTrace" id="O03983"/>
<dbReference type="PRO" id="PR:O03983"/>
<dbReference type="Proteomes" id="UP000006548">
    <property type="component" value="Chromosome 1"/>
</dbReference>
<dbReference type="ExpressionAtlas" id="O03983">
    <property type="expression patterns" value="baseline and differential"/>
</dbReference>
<dbReference type="GO" id="GO:0005829">
    <property type="term" value="C:cytosol"/>
    <property type="evidence" value="ECO:0007005"/>
    <property type="project" value="TAIR"/>
</dbReference>
<dbReference type="GO" id="GO:0050832">
    <property type="term" value="P:defense response to fungus"/>
    <property type="evidence" value="ECO:0000270"/>
    <property type="project" value="TAIR"/>
</dbReference>
<dbReference type="GO" id="GO:0009269">
    <property type="term" value="P:response to desiccation"/>
    <property type="evidence" value="ECO:0007669"/>
    <property type="project" value="InterPro"/>
</dbReference>
<dbReference type="GO" id="GO:0009644">
    <property type="term" value="P:response to high light intensity"/>
    <property type="evidence" value="ECO:0000270"/>
    <property type="project" value="TAIR"/>
</dbReference>
<dbReference type="GO" id="GO:0009611">
    <property type="term" value="P:response to wounding"/>
    <property type="evidence" value="ECO:0000270"/>
    <property type="project" value="TAIR"/>
</dbReference>
<dbReference type="FunFam" id="2.60.40.1820:FF:000001">
    <property type="entry name" value="Desiccation protectant protein Lea14-like"/>
    <property type="match status" value="1"/>
</dbReference>
<dbReference type="Gene3D" id="2.60.40.1820">
    <property type="match status" value="1"/>
</dbReference>
<dbReference type="InterPro" id="IPR045043">
    <property type="entry name" value="Lea14-like"/>
</dbReference>
<dbReference type="InterPro" id="IPR004864">
    <property type="entry name" value="LEA_2"/>
</dbReference>
<dbReference type="InterPro" id="IPR013990">
    <property type="entry name" value="WHy-dom"/>
</dbReference>
<dbReference type="PANTHER" id="PTHR31459">
    <property type="match status" value="1"/>
</dbReference>
<dbReference type="PANTHER" id="PTHR31459:SF19">
    <property type="entry name" value="DESICCATION-RELATED PROTEIN LEA14-RELATED"/>
    <property type="match status" value="1"/>
</dbReference>
<dbReference type="Pfam" id="PF03168">
    <property type="entry name" value="LEA_2"/>
    <property type="match status" value="1"/>
</dbReference>
<dbReference type="SMART" id="SM00769">
    <property type="entry name" value="WHy"/>
    <property type="match status" value="1"/>
</dbReference>
<dbReference type="SUPFAM" id="SSF117070">
    <property type="entry name" value="LEA14-like"/>
    <property type="match status" value="1"/>
</dbReference>
<gene>
    <name type="primary">LEA14</name>
    <name type="ordered locus">At1g01470</name>
    <name type="ORF">F22L4.3</name>
</gene>
<reference key="1">
    <citation type="journal article" date="1998" name="Gene">
        <title>Sequence analysis of a 40-kb Arabidopsis thaliana genomic region located at the top of chromosome 1.</title>
        <authorList>
            <person name="Terryn N."/>
            <person name="Gielen J."/>
            <person name="De Keyser A."/>
            <person name="Van Den Daele H."/>
            <person name="Ardiles W."/>
            <person name="Neyt P."/>
            <person name="De Clercq R."/>
            <person name="Coppieters J."/>
            <person name="Dehais P."/>
            <person name="Villarroel R."/>
            <person name="Rouze P."/>
            <person name="van Montagu M."/>
        </authorList>
    </citation>
    <scope>NUCLEOTIDE SEQUENCE [GENOMIC DNA]</scope>
    <source>
        <strain>cv. Columbia</strain>
    </source>
</reference>
<reference key="2">
    <citation type="journal article" date="2000" name="Nature">
        <title>Sequence and analysis of chromosome 1 of the plant Arabidopsis thaliana.</title>
        <authorList>
            <person name="Theologis A."/>
            <person name="Ecker J.R."/>
            <person name="Palm C.J."/>
            <person name="Federspiel N.A."/>
            <person name="Kaul S."/>
            <person name="White O."/>
            <person name="Alonso J."/>
            <person name="Altafi H."/>
            <person name="Araujo R."/>
            <person name="Bowman C.L."/>
            <person name="Brooks S.Y."/>
            <person name="Buehler E."/>
            <person name="Chan A."/>
            <person name="Chao Q."/>
            <person name="Chen H."/>
            <person name="Cheuk R.F."/>
            <person name="Chin C.W."/>
            <person name="Chung M.K."/>
            <person name="Conn L."/>
            <person name="Conway A.B."/>
            <person name="Conway A.R."/>
            <person name="Creasy T.H."/>
            <person name="Dewar K."/>
            <person name="Dunn P."/>
            <person name="Etgu P."/>
            <person name="Feldblyum T.V."/>
            <person name="Feng J.-D."/>
            <person name="Fong B."/>
            <person name="Fujii C.Y."/>
            <person name="Gill J.E."/>
            <person name="Goldsmith A.D."/>
            <person name="Haas B."/>
            <person name="Hansen N.F."/>
            <person name="Hughes B."/>
            <person name="Huizar L."/>
            <person name="Hunter J.L."/>
            <person name="Jenkins J."/>
            <person name="Johnson-Hopson C."/>
            <person name="Khan S."/>
            <person name="Khaykin E."/>
            <person name="Kim C.J."/>
            <person name="Koo H.L."/>
            <person name="Kremenetskaia I."/>
            <person name="Kurtz D.B."/>
            <person name="Kwan A."/>
            <person name="Lam B."/>
            <person name="Langin-Hooper S."/>
            <person name="Lee A."/>
            <person name="Lee J.M."/>
            <person name="Lenz C.A."/>
            <person name="Li J.H."/>
            <person name="Li Y.-P."/>
            <person name="Lin X."/>
            <person name="Liu S.X."/>
            <person name="Liu Z.A."/>
            <person name="Luros J.S."/>
            <person name="Maiti R."/>
            <person name="Marziali A."/>
            <person name="Militscher J."/>
            <person name="Miranda M."/>
            <person name="Nguyen M."/>
            <person name="Nierman W.C."/>
            <person name="Osborne B.I."/>
            <person name="Pai G."/>
            <person name="Peterson J."/>
            <person name="Pham P.K."/>
            <person name="Rizzo M."/>
            <person name="Rooney T."/>
            <person name="Rowley D."/>
            <person name="Sakano H."/>
            <person name="Salzberg S.L."/>
            <person name="Schwartz J.R."/>
            <person name="Shinn P."/>
            <person name="Southwick A.M."/>
            <person name="Sun H."/>
            <person name="Tallon L.J."/>
            <person name="Tambunga G."/>
            <person name="Toriumi M.J."/>
            <person name="Town C.D."/>
            <person name="Utterback T."/>
            <person name="Van Aken S."/>
            <person name="Vaysberg M."/>
            <person name="Vysotskaia V.S."/>
            <person name="Walker M."/>
            <person name="Wu D."/>
            <person name="Yu G."/>
            <person name="Fraser C.M."/>
            <person name="Venter J.C."/>
            <person name="Davis R.W."/>
        </authorList>
    </citation>
    <scope>NUCLEOTIDE SEQUENCE [LARGE SCALE GENOMIC DNA]</scope>
    <source>
        <strain>cv. Columbia</strain>
    </source>
</reference>
<reference key="3">
    <citation type="journal article" date="2017" name="Plant J.">
        <title>Araport11: a complete reannotation of the Arabidopsis thaliana reference genome.</title>
        <authorList>
            <person name="Cheng C.Y."/>
            <person name="Krishnakumar V."/>
            <person name="Chan A.P."/>
            <person name="Thibaud-Nissen F."/>
            <person name="Schobel S."/>
            <person name="Town C.D."/>
        </authorList>
    </citation>
    <scope>GENOME REANNOTATION</scope>
    <source>
        <strain>cv. Columbia</strain>
    </source>
</reference>
<reference key="4">
    <citation type="journal article" date="2003" name="Science">
        <title>Empirical analysis of transcriptional activity in the Arabidopsis genome.</title>
        <authorList>
            <person name="Yamada K."/>
            <person name="Lim J."/>
            <person name="Dale J.M."/>
            <person name="Chen H."/>
            <person name="Shinn P."/>
            <person name="Palm C.J."/>
            <person name="Southwick A.M."/>
            <person name="Wu H.C."/>
            <person name="Kim C.J."/>
            <person name="Nguyen M."/>
            <person name="Pham P.K."/>
            <person name="Cheuk R.F."/>
            <person name="Karlin-Newmann G."/>
            <person name="Liu S.X."/>
            <person name="Lam B."/>
            <person name="Sakano H."/>
            <person name="Wu T."/>
            <person name="Yu G."/>
            <person name="Miranda M."/>
            <person name="Quach H.L."/>
            <person name="Tripp M."/>
            <person name="Chang C.H."/>
            <person name="Lee J.M."/>
            <person name="Toriumi M.J."/>
            <person name="Chan M.M."/>
            <person name="Tang C.C."/>
            <person name="Onodera C.S."/>
            <person name="Deng J.M."/>
            <person name="Akiyama K."/>
            <person name="Ansari Y."/>
            <person name="Arakawa T."/>
            <person name="Banh J."/>
            <person name="Banno F."/>
            <person name="Bowser L."/>
            <person name="Brooks S.Y."/>
            <person name="Carninci P."/>
            <person name="Chao Q."/>
            <person name="Choy N."/>
            <person name="Enju A."/>
            <person name="Goldsmith A.D."/>
            <person name="Gurjal M."/>
            <person name="Hansen N.F."/>
            <person name="Hayashizaki Y."/>
            <person name="Johnson-Hopson C."/>
            <person name="Hsuan V.W."/>
            <person name="Iida K."/>
            <person name="Karnes M."/>
            <person name="Khan S."/>
            <person name="Koesema E."/>
            <person name="Ishida J."/>
            <person name="Jiang P.X."/>
            <person name="Jones T."/>
            <person name="Kawai J."/>
            <person name="Kamiya A."/>
            <person name="Meyers C."/>
            <person name="Nakajima M."/>
            <person name="Narusaka M."/>
            <person name="Seki M."/>
            <person name="Sakurai T."/>
            <person name="Satou M."/>
            <person name="Tamse R."/>
            <person name="Vaysberg M."/>
            <person name="Wallender E.K."/>
            <person name="Wong C."/>
            <person name="Yamamura Y."/>
            <person name="Yuan S."/>
            <person name="Shinozaki K."/>
            <person name="Davis R.W."/>
            <person name="Theologis A."/>
            <person name="Ecker J.R."/>
        </authorList>
    </citation>
    <scope>NUCLEOTIDE SEQUENCE [LARGE SCALE MRNA]</scope>
    <source>
        <strain>cv. Columbia</strain>
    </source>
</reference>
<reference key="5">
    <citation type="submission" date="2004-07" db="EMBL/GenBank/DDBJ databases">
        <title>Arabidopsis ORF clones.</title>
        <authorList>
            <person name="Cheuk R.F."/>
            <person name="Chen H."/>
            <person name="Kim C.J."/>
            <person name="Shinn P."/>
            <person name="Ecker J.R."/>
        </authorList>
    </citation>
    <scope>NUCLEOTIDE SEQUENCE [LARGE SCALE MRNA]</scope>
    <source>
        <strain>cv. Columbia</strain>
    </source>
</reference>
<reference key="6">
    <citation type="journal article" date="1996" name="Plant J.">
        <title>Further progress towards a catalogue of all Arabidopsis genes: analysis of a set of 5000 non-redundant ESTs.</title>
        <authorList>
            <person name="Cooke R."/>
            <person name="Raynal M."/>
            <person name="Laudie M."/>
            <person name="Grellet F."/>
            <person name="Delseny M."/>
            <person name="Morris P.-C."/>
            <person name="Guerrier D."/>
            <person name="Giraudat J."/>
            <person name="Quigley F."/>
            <person name="Clabault G."/>
            <person name="Li Y.-F."/>
            <person name="Mache R."/>
            <person name="Krivitzky M."/>
            <person name="Gy I.J.-J."/>
            <person name="Kreis M."/>
            <person name="Lecharny A."/>
            <person name="Parmentier Y."/>
            <person name="Marbach J."/>
            <person name="Fleck J."/>
            <person name="Clement B."/>
            <person name="Philipps G."/>
            <person name="Herve C."/>
            <person name="Bardet C."/>
            <person name="Tremousaygue D."/>
            <person name="Lescure B."/>
            <person name="Lacomme C."/>
            <person name="Roby D."/>
            <person name="Jourjon M.-F."/>
            <person name="Chabrier P."/>
            <person name="Charpenteau J.-L."/>
            <person name="Desprez T."/>
            <person name="Amselem J."/>
            <person name="Chiapello H."/>
            <person name="Hoefte H."/>
        </authorList>
    </citation>
    <scope>NUCLEOTIDE SEQUENCE [LARGE SCALE MRNA] OF 1-93</scope>
    <source>
        <strain>cv. Columbia</strain>
        <tissue>Dry seed</tissue>
    </source>
</reference>
<reference key="7">
    <citation type="journal article" date="2005" name="Protein Sci.">
        <title>Solution structure of a late embryogenesis abundant protein (LEA14) from Arabidopsis thaliana, a cellular stress-related protein.</title>
        <authorList>
            <person name="Singh S."/>
            <person name="Cornilescu C.C."/>
            <person name="Tyler R.C."/>
            <person name="Cornilescu G."/>
            <person name="Tonelli M."/>
            <person name="Lee M.S."/>
            <person name="Markley J.L."/>
        </authorList>
    </citation>
    <scope>STRUCTURE BY NMR OF 1-151</scope>
</reference>
<feature type="chain" id="PRO_0000221234" description="Probable desiccation-related protein LEA14">
    <location>
        <begin position="1"/>
        <end position="151"/>
    </location>
</feature>
<feature type="sequence conflict" description="In Ref. 6; CAA85534." evidence="1" ref="6">
    <original>V</original>
    <variation>F</variation>
    <location>
        <position position="47"/>
    </location>
</feature>
<feature type="sequence conflict" description="In Ref. 6; CAA85534." evidence="1" ref="6">
    <original>C</original>
    <variation>F</variation>
    <location>
        <position position="58"/>
    </location>
</feature>
<feature type="strand" evidence="2">
    <location>
        <begin position="13"/>
        <end position="15"/>
    </location>
</feature>
<feature type="strand" evidence="2">
    <location>
        <begin position="27"/>
        <end position="31"/>
    </location>
</feature>
<feature type="turn" evidence="2">
    <location>
        <begin position="35"/>
        <end position="37"/>
    </location>
</feature>
<feature type="strand" evidence="2">
    <location>
        <begin position="41"/>
        <end position="48"/>
    </location>
</feature>
<feature type="strand" evidence="2">
    <location>
        <begin position="50"/>
        <end position="53"/>
    </location>
</feature>
<feature type="strand" evidence="2">
    <location>
        <begin position="58"/>
        <end position="69"/>
    </location>
</feature>
<feature type="strand" evidence="2">
    <location>
        <begin position="71"/>
        <end position="78"/>
    </location>
</feature>
<feature type="strand" evidence="2">
    <location>
        <begin position="83"/>
        <end position="92"/>
    </location>
</feature>
<feature type="helix" evidence="2">
    <location>
        <begin position="98"/>
        <end position="111"/>
    </location>
</feature>
<feature type="strand" evidence="2">
    <location>
        <begin position="112"/>
        <end position="124"/>
    </location>
</feature>
<feature type="turn" evidence="2">
    <location>
        <begin position="127"/>
        <end position="129"/>
    </location>
</feature>
<feature type="strand" evidence="2">
    <location>
        <begin position="130"/>
        <end position="143"/>
    </location>
</feature>
<accession>O03983</accession>
<accession>Q42314</accession>
<proteinExistence type="evidence at protein level"/>
<sequence length="151" mass="16543">MASLLDKAKDFVADKLTAIPKPEGSVTDVDLKDVNRDSVEYLAKVSVTNPYSHSIPICEISFTFHSAGREIGKGKIPDPGSLKAKDMTALDIPVVVPYSILFNLARDVGVDWDIDYELQIGLTIDLPVVGEFTIPISSKGEIKLPTFKDFF</sequence>
<organism>
    <name type="scientific">Arabidopsis thaliana</name>
    <name type="common">Mouse-ear cress</name>
    <dbReference type="NCBI Taxonomy" id="3702"/>
    <lineage>
        <taxon>Eukaryota</taxon>
        <taxon>Viridiplantae</taxon>
        <taxon>Streptophyta</taxon>
        <taxon>Embryophyta</taxon>
        <taxon>Tracheophyta</taxon>
        <taxon>Spermatophyta</taxon>
        <taxon>Magnoliopsida</taxon>
        <taxon>eudicotyledons</taxon>
        <taxon>Gunneridae</taxon>
        <taxon>Pentapetalae</taxon>
        <taxon>rosids</taxon>
        <taxon>malvids</taxon>
        <taxon>Brassicales</taxon>
        <taxon>Brassicaceae</taxon>
        <taxon>Camelineae</taxon>
        <taxon>Arabidopsis</taxon>
    </lineage>
</organism>
<protein>
    <recommendedName>
        <fullName>Probable desiccation-related protein LEA14</fullName>
    </recommendedName>
</protein>
<name>LEA14_ARATH</name>
<keyword id="KW-0002">3D-structure</keyword>
<keyword id="KW-1185">Reference proteome</keyword>